<accession>P61012</accession>
<accession>P07473</accession>
<accession>Q56UH4</accession>
<gene>
    <name evidence="2" type="primary">PLN</name>
</gene>
<organism>
    <name type="scientific">Canis lupus familiaris</name>
    <name type="common">Dog</name>
    <name type="synonym">Canis familiaris</name>
    <dbReference type="NCBI Taxonomy" id="9615"/>
    <lineage>
        <taxon>Eukaryota</taxon>
        <taxon>Metazoa</taxon>
        <taxon>Chordata</taxon>
        <taxon>Craniata</taxon>
        <taxon>Vertebrata</taxon>
        <taxon>Euteleostomi</taxon>
        <taxon>Mammalia</taxon>
        <taxon>Eutheria</taxon>
        <taxon>Laurasiatheria</taxon>
        <taxon>Carnivora</taxon>
        <taxon>Caniformia</taxon>
        <taxon>Canidae</taxon>
        <taxon>Canis</taxon>
    </lineage>
</organism>
<proteinExistence type="evidence at protein level"/>
<reference key="1">
    <citation type="journal article" date="1987" name="J. Clin. Invest.">
        <title>Complete complementary DNA-derived amino acid sequence of canine cardiac phospholamban.</title>
        <authorList>
            <person name="Fujii J."/>
            <person name="Ueno A."/>
            <person name="Kitano K."/>
            <person name="Tanaka S."/>
            <person name="Kadoma M."/>
            <person name="Tada M."/>
        </authorList>
    </citation>
    <scope>NUCLEOTIDE SEQUENCE [MRNA]</scope>
    <scope>TISSUE SPECIFICITY</scope>
</reference>
<reference key="2">
    <citation type="journal article" date="1987" name="Nucleic Acids Res.">
        <title>The cDNA sequence of the major phospholamban mRNA in canine cardiac ventricular muscle.</title>
        <authorList>
            <person name="Uyeda A."/>
            <person name="Kitano K."/>
            <person name="Fujii J."/>
            <person name="Kadoma M."/>
            <person name="Tada M."/>
            <person name="Tanaka S."/>
        </authorList>
    </citation>
    <scope>NUCLEOTIDE SEQUENCE [MRNA]</scope>
    <source>
        <tissue>Heart ventricle</tissue>
    </source>
</reference>
<reference key="3">
    <citation type="journal article" date="2004" name="Genomics">
        <title>Comparative radiation hybrid map of canine chromosome 1 (CFA1) incorporating SNP and indel polymorphisms.</title>
        <authorList>
            <person name="Housley D.J.E."/>
            <person name="Ritzert E."/>
            <person name="Venta P.J."/>
        </authorList>
    </citation>
    <scope>NUCLEOTIDE SEQUENCE [GENOMIC DNA]</scope>
</reference>
<reference key="4">
    <citation type="journal article" date="2005" name="Am. J. Vet. Res.">
        <title>Evaluation of the phospholamban gene in purebred large-breed dogs with dilated cardiomyopathy.</title>
        <authorList>
            <person name="Stabej P."/>
            <person name="Leegwater P.A."/>
            <person name="Stokhof A.A."/>
            <person name="Domanjko-Petric A."/>
            <person name="van Oost B.A."/>
        </authorList>
    </citation>
    <scope>NUCLEOTIDE SEQUENCE [MRNA]</scope>
</reference>
<reference key="5">
    <citation type="journal article" date="1986" name="Biochem. Biophys. Res. Commun.">
        <title>Characterization of structural unit of phospholamban by amino acid sequencing and electrophoretic analysis.</title>
        <authorList>
            <person name="Fujii J."/>
            <person name="Kadoma M."/>
            <person name="Tada M."/>
            <person name="Toda H."/>
            <person name="Sakiyama F."/>
        </authorList>
    </citation>
    <scope>PROTEIN SEQUENCE OF 1-45</scope>
    <scope>ACETYLATION AT MET-1</scope>
    <scope>SUBUNIT</scope>
</reference>
<reference key="6">
    <citation type="journal article" date="1986" name="J. Biol. Chem.">
        <title>Sequence analysis of phospholamban. Identification of phosphorylation sites and two major structural domains.</title>
        <authorList>
            <person name="Simmerman H.K.B."/>
            <person name="Collins J.H."/>
            <person name="Theibert J.L."/>
            <person name="Wegener A.D."/>
            <person name="Jones L.R."/>
        </authorList>
    </citation>
    <scope>PROTEIN SEQUENCE OF 10-45</scope>
    <scope>PHOSPHORYLATION AT SER-16 AND THR-17</scope>
</reference>
<reference key="7">
    <citation type="journal article" date="1989" name="J. Biol. Chem.">
        <title>Phospholamban phosphorylation in intact ventricles. Phosphorylation of serine 16 and threonine 17 in response to beta-adrenergic stimulation.</title>
        <authorList>
            <person name="Wegener A.D."/>
            <person name="Simmerman H.K.B."/>
            <person name="Lindemann J.P."/>
            <person name="Jones L.R."/>
        </authorList>
    </citation>
    <scope>PHOSPHORYLATION AT SER-16 AND THR-17</scope>
</reference>
<reference key="8">
    <citation type="journal article" date="2022" name="J. Biol. Chem.">
        <title>Inhibitory and stimulatory micropeptides preferentially bind to different conformations of the cardiac calcium pump.</title>
        <authorList>
            <person name="Cleary S.R."/>
            <person name="Fang X."/>
            <person name="Cho E.E."/>
            <person name="Pribadi M.P."/>
            <person name="Seflova J."/>
            <person name="Beach J.R."/>
            <person name="Kekenes-Huskey P.M."/>
            <person name="Robia S.L."/>
        </authorList>
    </citation>
    <scope>FUNCTION</scope>
</reference>
<reference key="9">
    <citation type="journal article" date="2024" name="J. Biol. Chem.">
        <title>Phospholamban inhibits the cardiac calcium pump by interrupting an allosteric activation pathway.</title>
        <authorList>
            <person name="Cleary S.R."/>
            <person name="Seflova J."/>
            <person name="Cho E.E."/>
            <person name="Bisht K."/>
            <person name="Khandelia H."/>
            <person name="Espinoza-Fonseca L.M."/>
            <person name="Robia S.L."/>
        </authorList>
    </citation>
    <scope>FUNCTION</scope>
    <scope>MUTAGENESIS OF SER-16</scope>
</reference>
<reference evidence="14 15" key="10">
    <citation type="journal article" date="2013" name="J. Biol. Chem.">
        <title>The structural basis for phospholamban inhibition of the calcium pump in sarcoplasmic reticulum.</title>
        <authorList>
            <person name="Akin B.L."/>
            <person name="Hurley T.D."/>
            <person name="Chen Z."/>
            <person name="Jones L.R."/>
        </authorList>
    </citation>
    <scope>X-RAY CRYSTALLOGRAPHY (2.83 ANGSTROMS) OF WILD-TYPE AND MUTANT ALA-27; CYS-30; ALA-37 AND GLY-49 IN COMPLEX WITH RABBIT ATP2A1</scope>
    <scope>SUBUNIT</scope>
</reference>
<dbReference type="EMBL" id="M16012">
    <property type="protein sequence ID" value="AAA30884.1"/>
    <property type="molecule type" value="mRNA"/>
</dbReference>
<dbReference type="EMBL" id="Y00399">
    <property type="protein sequence ID" value="CAA68461.1"/>
    <property type="molecule type" value="mRNA"/>
</dbReference>
<dbReference type="EMBL" id="M35393">
    <property type="protein sequence ID" value="AAC41618.1"/>
    <property type="molecule type" value="mRNA"/>
</dbReference>
<dbReference type="EMBL" id="AY514751">
    <property type="protein sequence ID" value="AAT44582.1"/>
    <property type="molecule type" value="Genomic_DNA"/>
</dbReference>
<dbReference type="EMBL" id="AY576872">
    <property type="protein sequence ID" value="AAT48602.1"/>
    <property type="molecule type" value="Genomic_DNA"/>
</dbReference>
<dbReference type="PIR" id="A29002">
    <property type="entry name" value="A29002"/>
</dbReference>
<dbReference type="RefSeq" id="NP_001003332.1">
    <property type="nucleotide sequence ID" value="NM_001003332.1"/>
</dbReference>
<dbReference type="RefSeq" id="XP_013972393.1">
    <property type="nucleotide sequence ID" value="XM_014116918.1"/>
</dbReference>
<dbReference type="RefSeq" id="XP_038509367.1">
    <property type="nucleotide sequence ID" value="XM_038653439.1"/>
</dbReference>
<dbReference type="PDB" id="4KYT">
    <property type="method" value="X-ray"/>
    <property type="resolution" value="2.83 A"/>
    <property type="chains" value="B/C=1-52"/>
</dbReference>
<dbReference type="PDB" id="4Y3U">
    <property type="method" value="X-ray"/>
    <property type="resolution" value="3.51 A"/>
    <property type="chains" value="B=1-50"/>
</dbReference>
<dbReference type="PDBsum" id="4KYT"/>
<dbReference type="PDBsum" id="4Y3U"/>
<dbReference type="BMRB" id="P61012"/>
<dbReference type="SMR" id="P61012"/>
<dbReference type="FunCoup" id="P61012">
    <property type="interactions" value="32"/>
</dbReference>
<dbReference type="STRING" id="9615.ENSCAFP00000055407"/>
<dbReference type="iPTMnet" id="P61012"/>
<dbReference type="PaxDb" id="9612-ENSCAFP00000036921"/>
<dbReference type="Ensembl" id="ENSCAFT00000087967.2">
    <property type="protein sequence ID" value="ENSCAFP00000055407.1"/>
    <property type="gene ID" value="ENSCAFG00000049711.2"/>
</dbReference>
<dbReference type="Ensembl" id="ENSCAFT00000094839.1">
    <property type="protein sequence ID" value="ENSCAFP00000073568.1"/>
    <property type="gene ID" value="ENSCAFG00000049711.2"/>
</dbReference>
<dbReference type="Ensembl" id="ENSCAFT00030023576.1">
    <property type="protein sequence ID" value="ENSCAFP00030020549.1"/>
    <property type="gene ID" value="ENSCAFG00030012743.1"/>
</dbReference>
<dbReference type="Ensembl" id="ENSCAFT00040007630.1">
    <property type="protein sequence ID" value="ENSCAFP00040006659.1"/>
    <property type="gene ID" value="ENSCAFG00040003994.1"/>
</dbReference>
<dbReference type="Ensembl" id="ENSCAFT00845012486.1">
    <property type="protein sequence ID" value="ENSCAFP00845009755.1"/>
    <property type="gene ID" value="ENSCAFG00845007035.1"/>
</dbReference>
<dbReference type="Ensembl" id="ENSCAFT00845012506.1">
    <property type="protein sequence ID" value="ENSCAFP00845009770.1"/>
    <property type="gene ID" value="ENSCAFG00845007035.1"/>
</dbReference>
<dbReference type="GeneID" id="414755"/>
<dbReference type="KEGG" id="cfa:414755"/>
<dbReference type="CTD" id="5350"/>
<dbReference type="VEuPathDB" id="HostDB:ENSCAFG00845007035"/>
<dbReference type="VGNC" id="VGNC:44700">
    <property type="gene designation" value="PLN"/>
</dbReference>
<dbReference type="eggNOG" id="ENOG502S97F">
    <property type="taxonomic scope" value="Eukaryota"/>
</dbReference>
<dbReference type="GeneTree" id="ENSGT00390000002403"/>
<dbReference type="HOGENOM" id="CLU_214576_0_0_1"/>
<dbReference type="InParanoid" id="P61012"/>
<dbReference type="OMA" id="QHTMRSA"/>
<dbReference type="TreeFam" id="TF330750"/>
<dbReference type="Reactome" id="R-CFA-5578775">
    <property type="pathway name" value="Ion homeostasis"/>
</dbReference>
<dbReference type="Reactome" id="R-CFA-936837">
    <property type="pathway name" value="Ion transport by P-type ATPases"/>
</dbReference>
<dbReference type="EvolutionaryTrace" id="P61012"/>
<dbReference type="Proteomes" id="UP000002254">
    <property type="component" value="Chromosome 1"/>
</dbReference>
<dbReference type="Proteomes" id="UP000694429">
    <property type="component" value="Chromosome 1"/>
</dbReference>
<dbReference type="Proteomes" id="UP000694542">
    <property type="component" value="Chromosome 1"/>
</dbReference>
<dbReference type="Proteomes" id="UP000805418">
    <property type="component" value="Chromosome 1"/>
</dbReference>
<dbReference type="Bgee" id="ENSCAFG00000049711">
    <property type="expression patterns" value="Expressed in cardiac muscle of left ventricle and 44 other cell types or tissues"/>
</dbReference>
<dbReference type="GO" id="GO:0090534">
    <property type="term" value="C:calcium ion-transporting ATPase complex"/>
    <property type="evidence" value="ECO:0007669"/>
    <property type="project" value="Ensembl"/>
</dbReference>
<dbReference type="GO" id="GO:0005789">
    <property type="term" value="C:endoplasmic reticulum membrane"/>
    <property type="evidence" value="ECO:0000250"/>
    <property type="project" value="UniProtKB"/>
</dbReference>
<dbReference type="GO" id="GO:0016020">
    <property type="term" value="C:membrane"/>
    <property type="evidence" value="ECO:0000318"/>
    <property type="project" value="GO_Central"/>
</dbReference>
<dbReference type="GO" id="GO:0031966">
    <property type="term" value="C:mitochondrial membrane"/>
    <property type="evidence" value="ECO:0007669"/>
    <property type="project" value="UniProtKB-SubCell"/>
</dbReference>
<dbReference type="GO" id="GO:1990629">
    <property type="term" value="C:phospholamban complex"/>
    <property type="evidence" value="ECO:0007669"/>
    <property type="project" value="Ensembl"/>
</dbReference>
<dbReference type="GO" id="GO:0016529">
    <property type="term" value="C:sarcoplasmic reticulum"/>
    <property type="evidence" value="ECO:0000318"/>
    <property type="project" value="GO_Central"/>
</dbReference>
<dbReference type="GO" id="GO:0033017">
    <property type="term" value="C:sarcoplasmic reticulum membrane"/>
    <property type="evidence" value="ECO:0000250"/>
    <property type="project" value="UniProtKB"/>
</dbReference>
<dbReference type="GO" id="GO:0042030">
    <property type="term" value="F:ATPase inhibitor activity"/>
    <property type="evidence" value="ECO:0000314"/>
    <property type="project" value="BHF-UCL"/>
</dbReference>
<dbReference type="GO" id="GO:0042803">
    <property type="term" value="F:protein homodimerization activity"/>
    <property type="evidence" value="ECO:0000250"/>
    <property type="project" value="UniProtKB"/>
</dbReference>
<dbReference type="GO" id="GO:0001675">
    <property type="term" value="P:acrosome assembly"/>
    <property type="evidence" value="ECO:0000250"/>
    <property type="project" value="UniProtKB"/>
</dbReference>
<dbReference type="GO" id="GO:0086023">
    <property type="term" value="P:adenylate cyclase-activating adrenergic receptor signaling pathway involved in heart process"/>
    <property type="evidence" value="ECO:0007669"/>
    <property type="project" value="Ensembl"/>
</dbReference>
<dbReference type="GO" id="GO:0048738">
    <property type="term" value="P:cardiac muscle tissue development"/>
    <property type="evidence" value="ECO:0007669"/>
    <property type="project" value="Ensembl"/>
</dbReference>
<dbReference type="GO" id="GO:0050802">
    <property type="term" value="P:circadian sleep/wake cycle, sleep"/>
    <property type="evidence" value="ECO:0000250"/>
    <property type="project" value="UniProtKB"/>
</dbReference>
<dbReference type="GO" id="GO:0006874">
    <property type="term" value="P:intracellular calcium ion homeostasis"/>
    <property type="evidence" value="ECO:0000250"/>
    <property type="project" value="UniProtKB"/>
</dbReference>
<dbReference type="GO" id="GO:0045475">
    <property type="term" value="P:locomotor rhythm"/>
    <property type="evidence" value="ECO:0000250"/>
    <property type="project" value="UniProtKB"/>
</dbReference>
<dbReference type="GO" id="GO:0046716">
    <property type="term" value="P:muscle cell cellular homeostasis"/>
    <property type="evidence" value="ECO:0007669"/>
    <property type="project" value="Ensembl"/>
</dbReference>
<dbReference type="GO" id="GO:0032780">
    <property type="term" value="P:negative regulation of ATP-dependent activity"/>
    <property type="evidence" value="ECO:0000314"/>
    <property type="project" value="BHF-UCL"/>
</dbReference>
<dbReference type="GO" id="GO:1901895">
    <property type="term" value="P:negative regulation of ATPase-coupled calcium transmembrane transporter activity"/>
    <property type="evidence" value="ECO:0000250"/>
    <property type="project" value="UniProtKB"/>
</dbReference>
<dbReference type="GO" id="GO:1902081">
    <property type="term" value="P:negative regulation of calcium ion import into sarcoplasmic reticulum"/>
    <property type="evidence" value="ECO:0000314"/>
    <property type="project" value="BHF-UCL"/>
</dbReference>
<dbReference type="GO" id="GO:1901020">
    <property type="term" value="P:negative regulation of calcium ion transmembrane transporter activity"/>
    <property type="evidence" value="ECO:0000314"/>
    <property type="project" value="BHF-UCL"/>
</dbReference>
<dbReference type="GO" id="GO:0010459">
    <property type="term" value="P:negative regulation of heart rate"/>
    <property type="evidence" value="ECO:0000318"/>
    <property type="project" value="GO_Central"/>
</dbReference>
<dbReference type="GO" id="GO:0007219">
    <property type="term" value="P:Notch signaling pathway"/>
    <property type="evidence" value="ECO:0007669"/>
    <property type="project" value="Ensembl"/>
</dbReference>
<dbReference type="GO" id="GO:0090279">
    <property type="term" value="P:regulation of calcium ion import"/>
    <property type="evidence" value="ECO:0007669"/>
    <property type="project" value="Ensembl"/>
</dbReference>
<dbReference type="GO" id="GO:0051924">
    <property type="term" value="P:regulation of calcium ion transport"/>
    <property type="evidence" value="ECO:0000250"/>
    <property type="project" value="UniProtKB"/>
</dbReference>
<dbReference type="GO" id="GO:0086004">
    <property type="term" value="P:regulation of cardiac muscle cell contraction"/>
    <property type="evidence" value="ECO:0007669"/>
    <property type="project" value="Ensembl"/>
</dbReference>
<dbReference type="GO" id="GO:0010881">
    <property type="term" value="P:regulation of cardiac muscle contraction by regulation of the release of sequestered calcium ion"/>
    <property type="evidence" value="ECO:0007669"/>
    <property type="project" value="Ensembl"/>
</dbReference>
<dbReference type="GO" id="GO:1901077">
    <property type="term" value="P:regulation of relaxation of muscle"/>
    <property type="evidence" value="ECO:0007669"/>
    <property type="project" value="Ensembl"/>
</dbReference>
<dbReference type="GO" id="GO:0086092">
    <property type="term" value="P:regulation of the force of heart contraction by cardiac conduction"/>
    <property type="evidence" value="ECO:0007669"/>
    <property type="project" value="Ensembl"/>
</dbReference>
<dbReference type="GO" id="GO:0008542">
    <property type="term" value="P:visual learning"/>
    <property type="evidence" value="ECO:0000250"/>
    <property type="project" value="UniProtKB"/>
</dbReference>
<dbReference type="CDD" id="cd20250">
    <property type="entry name" value="Phospholamban"/>
    <property type="match status" value="1"/>
</dbReference>
<dbReference type="DisProt" id="DP00801"/>
<dbReference type="FunFam" id="1.20.5.290:FF:000001">
    <property type="entry name" value="Cardiac phospholamban"/>
    <property type="match status" value="1"/>
</dbReference>
<dbReference type="Gene3D" id="1.20.5.290">
    <property type="entry name" value="Phospholamban"/>
    <property type="match status" value="1"/>
</dbReference>
<dbReference type="InterPro" id="IPR005984">
    <property type="entry name" value="PLB"/>
</dbReference>
<dbReference type="NCBIfam" id="TIGR01294">
    <property type="entry name" value="P_lamban"/>
    <property type="match status" value="1"/>
</dbReference>
<dbReference type="PANTHER" id="PTHR21194">
    <property type="entry name" value="CARDIAC PHOSPHOLAMBAN"/>
    <property type="match status" value="1"/>
</dbReference>
<dbReference type="PANTHER" id="PTHR21194:SF1">
    <property type="entry name" value="CARDIAC PHOSPHOLAMBAN"/>
    <property type="match status" value="1"/>
</dbReference>
<dbReference type="Pfam" id="PF04272">
    <property type="entry name" value="Phospholamban"/>
    <property type="match status" value="1"/>
</dbReference>
<dbReference type="PIRSF" id="PIRSF001665">
    <property type="entry name" value="PLB"/>
    <property type="match status" value="1"/>
</dbReference>
<name>PPLA_CANLF</name>
<sequence>MDKVQYLTRSAIRRASTIEMPQQARQNLQNLFINFCLILICLLLICIIVMLL</sequence>
<comment type="function">
    <text evidence="3 7 11">Reversibly inhibits the activity of ATP2A2/SERCA2 in cardiac sarcoplasmic reticulum by decreasing the apparent affinity of the ATPase for Ca(2+) (By similarity). Binds preferentially to the ATP-bound E1 conformational form of ATP2A2 which predominates at low Ca(2+) concentrations during the diastolic phase of the cardiac cycle (PubMed:35605666). Inhibits ATP2A2 Ca(2+) affinity by disrupting its allosteric activation by ATP (PubMed:38583863). Modulates the contractility of the heart muscle in response to physiological stimuli via its effects on ATP2A2 (By similarity). Modulates calcium re-uptake during muscle relaxation and plays an important role in calcium homeostasis in the heart muscle (By similarity). The degree of ATP2A2 inhibition depends on the oligomeric state of PLN. ATP2A2 inhibition is alleviated by PLN phosphorylation (By similarity). Also inhibits the activity of ATP2A3/SERCA3 (By similarity). Controls intracellular Ca(2+) levels in elongated spermatids and may play a role in germ cell differentiation (By similarity). In the thalamic reticular nucleus of the brain, plays a role in the regulation of sleep patterns and executive functioning (By similarity).</text>
</comment>
<comment type="subunit">
    <text evidence="2 3 5 8">Homopentamer (PubMed:23996003, PubMed:3753485). Can also form heterooligomers with other sarcoplasmic/endoplasmic reticulum calcium ATPase (SERCA) regulators ARLN, ERLN, SLN and STRIT1/DWORF (By similarity). Monomer (By similarity). Interacts with HAX1 (By similarity). Interacts as a monomer with ATP2A2; the interaction decreases ATP2A2 Ca(2+) affinity (By similarity). Interacts with VMP1; VMP1 competes with PLN and SLN to prevent them from forming an inhibitory complex with ATP2A2 (By similarity). Interacts with S100A1 in a Ca(2+)-dependent manner (By similarity).</text>
</comment>
<comment type="subcellular location">
    <subcellularLocation>
        <location evidence="2">Endoplasmic reticulum membrane</location>
        <topology evidence="4">Single-pass membrane protein</topology>
    </subcellularLocation>
    <subcellularLocation>
        <location evidence="2">Sarcoplasmic reticulum membrane</location>
        <topology evidence="4">Single-pass membrane protein</topology>
    </subcellularLocation>
    <subcellularLocation>
        <location evidence="1">Mitochondrion membrane</location>
        <topology evidence="4">Single-pass membrane protein</topology>
    </subcellularLocation>
    <subcellularLocation>
        <location evidence="3">Membrane</location>
        <topology evidence="4">Single-pass membrane protein</topology>
    </subcellularLocation>
    <text evidence="2">Colocalizes with HAX1 at the endoplasmic reticulum. Colocalizes with DMPK at the sarcoplasmic reticulum.</text>
</comment>
<comment type="tissue specificity">
    <text evidence="10">Heart.</text>
</comment>
<comment type="PTM">
    <text evidence="2 6 9">Phosphorylation by DMPK may stimulate sarcoplasmic reticulum calcium uptake in cardiomyocytes (By similarity). Phosphorylation by PKA abolishes the inhibition of ATP2A2-mediated calcium uptake. Phosphorylated at Thr-17 by CaMK2, and in response to beta-adrenergic stimulation.</text>
</comment>
<comment type="PTM">
    <text evidence="3">Palmitoylated by ZDHHC16, promoting formation of the homopentamer.</text>
</comment>
<comment type="PTM">
    <text evidence="3">In elongated spermatids, proteolytically cleaved by SPPL2C which modulates intracellular Ca(2+) homeostasis.</text>
</comment>
<comment type="similarity">
    <text evidence="13">Belongs to the phospholamban family.</text>
</comment>
<evidence type="ECO:0000250" key="1">
    <source>
        <dbReference type="UniProtKB" id="A4IFH6"/>
    </source>
</evidence>
<evidence type="ECO:0000250" key="2">
    <source>
        <dbReference type="UniProtKB" id="P26678"/>
    </source>
</evidence>
<evidence type="ECO:0000250" key="3">
    <source>
        <dbReference type="UniProtKB" id="P61014"/>
    </source>
</evidence>
<evidence type="ECO:0000255" key="4"/>
<evidence type="ECO:0000269" key="5">
    <source>
    </source>
</evidence>
<evidence type="ECO:0000269" key="6">
    <source>
    </source>
</evidence>
<evidence type="ECO:0000269" key="7">
    <source>
    </source>
</evidence>
<evidence type="ECO:0000269" key="8">
    <source>
    </source>
</evidence>
<evidence type="ECO:0000269" key="9">
    <source>
    </source>
</evidence>
<evidence type="ECO:0000269" key="10">
    <source>
    </source>
</evidence>
<evidence type="ECO:0000269" key="11">
    <source>
    </source>
</evidence>
<evidence type="ECO:0000303" key="12">
    <source>
    </source>
</evidence>
<evidence type="ECO:0000305" key="13"/>
<evidence type="ECO:0007744" key="14">
    <source>
        <dbReference type="PDB" id="4KYT"/>
    </source>
</evidence>
<evidence type="ECO:0007744" key="15">
    <source>
        <dbReference type="PDB" id="4Y3U"/>
    </source>
</evidence>
<evidence type="ECO:0007829" key="16">
    <source>
        <dbReference type="PDB" id="4KYT"/>
    </source>
</evidence>
<protein>
    <recommendedName>
        <fullName evidence="12">Phospholamban</fullName>
        <shortName>PLB</shortName>
    </recommendedName>
</protein>
<feature type="chain" id="PRO_0000191243" description="Phospholamban">
    <location>
        <begin position="1"/>
        <end position="52"/>
    </location>
</feature>
<feature type="topological domain" description="Cytoplasmic" evidence="4">
    <location>
        <begin position="1"/>
        <end position="31"/>
    </location>
</feature>
<feature type="transmembrane region" description="Helical" evidence="4">
    <location>
        <begin position="32"/>
        <end position="52"/>
    </location>
</feature>
<feature type="modified residue" description="N-acetylmethionine" evidence="8">
    <location>
        <position position="1"/>
    </location>
</feature>
<feature type="modified residue" description="Phosphoserine; by PKA and DMPK" evidence="6 9">
    <location>
        <position position="16"/>
    </location>
</feature>
<feature type="modified residue" description="Phosphothreonine; by CaMK2" evidence="6 9">
    <location>
        <position position="17"/>
    </location>
</feature>
<feature type="lipid moiety-binding region" description="S-palmitoyl cysteine" evidence="3">
    <location>
        <position position="36"/>
    </location>
</feature>
<feature type="mutagenesis site" description="Phosphomimetic mutant; abolishes the inhibitory effect of PLB on ATP2A2 Ca2+ affinity." evidence="11">
    <original>S</original>
    <variation>E</variation>
    <location>
        <position position="16"/>
    </location>
</feature>
<feature type="helix" evidence="16">
    <location>
        <begin position="25"/>
        <end position="47"/>
    </location>
</feature>
<keyword id="KW-0002">3D-structure</keyword>
<keyword id="KW-0007">Acetylation</keyword>
<keyword id="KW-0903">Direct protein sequencing</keyword>
<keyword id="KW-0256">Endoplasmic reticulum</keyword>
<keyword id="KW-0449">Lipoprotein</keyword>
<keyword id="KW-0472">Membrane</keyword>
<keyword id="KW-0496">Mitochondrion</keyword>
<keyword id="KW-0564">Palmitate</keyword>
<keyword id="KW-0597">Phosphoprotein</keyword>
<keyword id="KW-1185">Reference proteome</keyword>
<keyword id="KW-0703">Sarcoplasmic reticulum</keyword>
<keyword id="KW-0812">Transmembrane</keyword>
<keyword id="KW-1133">Transmembrane helix</keyword>